<gene>
    <name type="primary">ZNF574</name>
</gene>
<dbReference type="EMBL" id="BC114139">
    <property type="protein sequence ID" value="AAI14140.1"/>
    <property type="molecule type" value="mRNA"/>
</dbReference>
<dbReference type="RefSeq" id="NP_001070007.1">
    <property type="nucleotide sequence ID" value="NM_001076539.1"/>
</dbReference>
<dbReference type="RefSeq" id="XP_059732975.1">
    <property type="nucleotide sequence ID" value="XM_059876992.1"/>
</dbReference>
<dbReference type="RefSeq" id="XP_059732976.1">
    <property type="nucleotide sequence ID" value="XM_059876993.1"/>
</dbReference>
<dbReference type="RefSeq" id="XP_059732977.1">
    <property type="nucleotide sequence ID" value="XM_059876994.1"/>
</dbReference>
<dbReference type="SMR" id="Q29RK0"/>
<dbReference type="FunCoup" id="Q29RK0">
    <property type="interactions" value="2438"/>
</dbReference>
<dbReference type="STRING" id="9913.ENSBTAP00000047002"/>
<dbReference type="PaxDb" id="9913-ENSBTAP00000047002"/>
<dbReference type="Ensembl" id="ENSBTAT00000031986.6">
    <property type="protein sequence ID" value="ENSBTAP00000047002.4"/>
    <property type="gene ID" value="ENSBTAG00000021789.7"/>
</dbReference>
<dbReference type="Ensembl" id="ENSBTAT00000089804.1">
    <property type="protein sequence ID" value="ENSBTAP00000101398.1"/>
    <property type="gene ID" value="ENSBTAG00000021789.7"/>
</dbReference>
<dbReference type="Ensembl" id="ENSBTAT00000093083.1">
    <property type="protein sequence ID" value="ENSBTAP00000076157.1"/>
    <property type="gene ID" value="ENSBTAG00000021789.7"/>
</dbReference>
<dbReference type="Ensembl" id="ENSBTAT00000130822.1">
    <property type="protein sequence ID" value="ENSBTAP00000085513.1"/>
    <property type="gene ID" value="ENSBTAG00000021789.7"/>
</dbReference>
<dbReference type="GeneID" id="767618"/>
<dbReference type="KEGG" id="bta:767618"/>
<dbReference type="CTD" id="64763"/>
<dbReference type="VEuPathDB" id="HostDB:ENSBTAG00000021789"/>
<dbReference type="VGNC" id="VGNC:50117">
    <property type="gene designation" value="ZNF574"/>
</dbReference>
<dbReference type="eggNOG" id="KOG1721">
    <property type="taxonomic scope" value="Eukaryota"/>
</dbReference>
<dbReference type="GeneTree" id="ENSGT00940000161799"/>
<dbReference type="InParanoid" id="Q29RK0"/>
<dbReference type="OMA" id="DCAKPFN"/>
<dbReference type="OrthoDB" id="8922241at2759"/>
<dbReference type="Proteomes" id="UP000009136">
    <property type="component" value="Chromosome 18"/>
</dbReference>
<dbReference type="Bgee" id="ENSBTAG00000021789">
    <property type="expression patterns" value="Expressed in laryngeal cartilage and 105 other cell types or tissues"/>
</dbReference>
<dbReference type="GO" id="GO:0005634">
    <property type="term" value="C:nucleus"/>
    <property type="evidence" value="ECO:0000318"/>
    <property type="project" value="GO_Central"/>
</dbReference>
<dbReference type="GO" id="GO:0003677">
    <property type="term" value="F:DNA binding"/>
    <property type="evidence" value="ECO:0007669"/>
    <property type="project" value="UniProtKB-KW"/>
</dbReference>
<dbReference type="GO" id="GO:0008270">
    <property type="term" value="F:zinc ion binding"/>
    <property type="evidence" value="ECO:0007669"/>
    <property type="project" value="UniProtKB-KW"/>
</dbReference>
<dbReference type="GO" id="GO:0006357">
    <property type="term" value="P:regulation of transcription by RNA polymerase II"/>
    <property type="evidence" value="ECO:0000318"/>
    <property type="project" value="GO_Central"/>
</dbReference>
<dbReference type="FunFam" id="3.30.160.60:FF:000145">
    <property type="entry name" value="Zinc finger protein 574"/>
    <property type="match status" value="1"/>
</dbReference>
<dbReference type="FunFam" id="3.30.160.60:FF:000202">
    <property type="entry name" value="Zinc finger protein 574"/>
    <property type="match status" value="1"/>
</dbReference>
<dbReference type="FunFam" id="3.30.160.60:FF:000788">
    <property type="entry name" value="Zinc finger protein 574"/>
    <property type="match status" value="1"/>
</dbReference>
<dbReference type="FunFam" id="3.30.160.60:FF:001231">
    <property type="entry name" value="Zinc finger protein 574"/>
    <property type="match status" value="1"/>
</dbReference>
<dbReference type="FunFam" id="3.30.160.60:FF:000381">
    <property type="entry name" value="zinc finger protein 574"/>
    <property type="match status" value="3"/>
</dbReference>
<dbReference type="FunFam" id="3.30.160.60:FF:001169">
    <property type="entry name" value="zinc finger protein 574"/>
    <property type="match status" value="1"/>
</dbReference>
<dbReference type="FunFam" id="3.30.160.60:FF:001184">
    <property type="entry name" value="zinc finger protein 574"/>
    <property type="match status" value="1"/>
</dbReference>
<dbReference type="FunFam" id="3.30.160.60:FF:001285">
    <property type="entry name" value="zinc finger protein 574"/>
    <property type="match status" value="1"/>
</dbReference>
<dbReference type="Gene3D" id="3.30.160.60">
    <property type="entry name" value="Classic Zinc Finger"/>
    <property type="match status" value="13"/>
</dbReference>
<dbReference type="InterPro" id="IPR036236">
    <property type="entry name" value="Znf_C2H2_sf"/>
</dbReference>
<dbReference type="InterPro" id="IPR013087">
    <property type="entry name" value="Znf_C2H2_type"/>
</dbReference>
<dbReference type="PANTHER" id="PTHR24393:SF158">
    <property type="entry name" value="C2H2-TYPE DOMAIN-CONTAINING PROTEIN"/>
    <property type="match status" value="1"/>
</dbReference>
<dbReference type="PANTHER" id="PTHR24393">
    <property type="entry name" value="ZINC FINGER PROTEIN"/>
    <property type="match status" value="1"/>
</dbReference>
<dbReference type="Pfam" id="PF00096">
    <property type="entry name" value="zf-C2H2"/>
    <property type="match status" value="6"/>
</dbReference>
<dbReference type="Pfam" id="PF13912">
    <property type="entry name" value="zf-C2H2_6"/>
    <property type="match status" value="2"/>
</dbReference>
<dbReference type="Pfam" id="PF12874">
    <property type="entry name" value="zf-met"/>
    <property type="match status" value="1"/>
</dbReference>
<dbReference type="SMART" id="SM00355">
    <property type="entry name" value="ZnF_C2H2"/>
    <property type="match status" value="20"/>
</dbReference>
<dbReference type="SUPFAM" id="SSF57667">
    <property type="entry name" value="beta-beta-alpha zinc fingers"/>
    <property type="match status" value="11"/>
</dbReference>
<dbReference type="PROSITE" id="PS00028">
    <property type="entry name" value="ZINC_FINGER_C2H2_1"/>
    <property type="match status" value="18"/>
</dbReference>
<dbReference type="PROSITE" id="PS50157">
    <property type="entry name" value="ZINC_FINGER_C2H2_2"/>
    <property type="match status" value="19"/>
</dbReference>
<evidence type="ECO:0000250" key="1">
    <source>
        <dbReference type="UniProtKB" id="Q6ZN55"/>
    </source>
</evidence>
<evidence type="ECO:0000255" key="2">
    <source>
        <dbReference type="PROSITE-ProRule" id="PRU00042"/>
    </source>
</evidence>
<evidence type="ECO:0000256" key="3">
    <source>
        <dbReference type="SAM" id="MobiDB-lite"/>
    </source>
</evidence>
<evidence type="ECO:0000305" key="4"/>
<name>ZN574_BOVIN</name>
<keyword id="KW-0238">DNA-binding</keyword>
<keyword id="KW-0479">Metal-binding</keyword>
<keyword id="KW-0488">Methylation</keyword>
<keyword id="KW-0539">Nucleus</keyword>
<keyword id="KW-0597">Phosphoprotein</keyword>
<keyword id="KW-1185">Reference proteome</keyword>
<keyword id="KW-0677">Repeat</keyword>
<keyword id="KW-0804">Transcription</keyword>
<keyword id="KW-0805">Transcription regulation</keyword>
<keyword id="KW-0862">Zinc</keyword>
<keyword id="KW-0863">Zinc-finger</keyword>
<feature type="chain" id="PRO_0000274860" description="Zinc finger protein 574">
    <location>
        <begin position="1"/>
        <end position="896"/>
    </location>
</feature>
<feature type="zinc finger region" description="C2H2-type 1" evidence="2">
    <location>
        <begin position="16"/>
        <end position="38"/>
    </location>
</feature>
<feature type="zinc finger region" description="C2H2-type 2" evidence="2">
    <location>
        <begin position="76"/>
        <end position="98"/>
    </location>
</feature>
<feature type="zinc finger region" description="C2H2-type 3" evidence="2">
    <location>
        <begin position="126"/>
        <end position="148"/>
    </location>
</feature>
<feature type="zinc finger region" description="C2H2-type 4" evidence="2">
    <location>
        <begin position="214"/>
        <end position="236"/>
    </location>
</feature>
<feature type="zinc finger region" description="C2H2-type 5" evidence="2">
    <location>
        <begin position="309"/>
        <end position="331"/>
    </location>
</feature>
<feature type="zinc finger region" description="C2H2-type 6" evidence="2">
    <location>
        <begin position="336"/>
        <end position="358"/>
    </location>
</feature>
<feature type="zinc finger region" description="C2H2-type 7" evidence="2">
    <location>
        <begin position="364"/>
        <end position="386"/>
    </location>
</feature>
<feature type="zinc finger region" description="C2H2-type 8" evidence="2">
    <location>
        <begin position="392"/>
        <end position="413"/>
    </location>
</feature>
<feature type="zinc finger region" description="C2H2-type 9" evidence="2">
    <location>
        <begin position="466"/>
        <end position="489"/>
    </location>
</feature>
<feature type="zinc finger region" description="C2H2-type 10" evidence="2">
    <location>
        <begin position="495"/>
        <end position="517"/>
    </location>
</feature>
<feature type="zinc finger region" description="C2H2-type 11" evidence="2">
    <location>
        <begin position="523"/>
        <end position="545"/>
    </location>
</feature>
<feature type="zinc finger region" description="C2H2-type 12" evidence="2">
    <location>
        <begin position="551"/>
        <end position="573"/>
    </location>
</feature>
<feature type="zinc finger region" description="C2H2-type 13" evidence="2">
    <location>
        <begin position="579"/>
        <end position="601"/>
    </location>
</feature>
<feature type="zinc finger region" description="C2H2-type 14" evidence="2">
    <location>
        <begin position="607"/>
        <end position="630"/>
    </location>
</feature>
<feature type="zinc finger region" description="C2H2-type 15; degenerate" evidence="2">
    <location>
        <begin position="636"/>
        <end position="659"/>
    </location>
</feature>
<feature type="zinc finger region" description="C2H2-type 16" evidence="2">
    <location>
        <begin position="667"/>
        <end position="689"/>
    </location>
</feature>
<feature type="zinc finger region" description="C2H2-type 17" evidence="2">
    <location>
        <begin position="738"/>
        <end position="760"/>
    </location>
</feature>
<feature type="zinc finger region" description="C2H2-type 18" evidence="2">
    <location>
        <begin position="766"/>
        <end position="788"/>
    </location>
</feature>
<feature type="zinc finger region" description="C2H2-type 19" evidence="2">
    <location>
        <begin position="794"/>
        <end position="816"/>
    </location>
</feature>
<feature type="zinc finger region" description="C2H2-type 20" evidence="2">
    <location>
        <begin position="822"/>
        <end position="844"/>
    </location>
</feature>
<feature type="region of interest" description="Disordered" evidence="3">
    <location>
        <begin position="259"/>
        <end position="303"/>
    </location>
</feature>
<feature type="region of interest" description="Disordered" evidence="3">
    <location>
        <begin position="434"/>
        <end position="460"/>
    </location>
</feature>
<feature type="region of interest" description="Disordered" evidence="3">
    <location>
        <begin position="687"/>
        <end position="733"/>
    </location>
</feature>
<feature type="compositionally biased region" description="Low complexity" evidence="3">
    <location>
        <begin position="259"/>
        <end position="272"/>
    </location>
</feature>
<feature type="compositionally biased region" description="Basic and acidic residues" evidence="3">
    <location>
        <begin position="274"/>
        <end position="287"/>
    </location>
</feature>
<feature type="compositionally biased region" description="Low complexity" evidence="3">
    <location>
        <begin position="707"/>
        <end position="732"/>
    </location>
</feature>
<feature type="modified residue" description="Phosphoserine" evidence="1">
    <location>
        <position position="164"/>
    </location>
</feature>
<feature type="modified residue" description="Phosphoserine" evidence="1">
    <location>
        <position position="298"/>
    </location>
</feature>
<feature type="modified residue" description="Phosphoserine" evidence="1">
    <location>
        <position position="717"/>
    </location>
</feature>
<feature type="modified residue" description="Asymmetric dimethylarginine" evidence="1">
    <location>
        <position position="832"/>
    </location>
</feature>
<accession>Q29RK0</accession>
<proteinExistence type="evidence at transcript level"/>
<reference key="1">
    <citation type="submission" date="2006-02" db="EMBL/GenBank/DDBJ databases">
        <authorList>
            <consortium name="NIH - Mammalian Gene Collection (MGC) project"/>
        </authorList>
    </citation>
    <scope>NUCLEOTIDE SEQUENCE [LARGE SCALE MRNA]</scope>
    <source>
        <strain>Hereford</strain>
        <tissue>Heart ventricle</tissue>
    </source>
</reference>
<organism>
    <name type="scientific">Bos taurus</name>
    <name type="common">Bovine</name>
    <dbReference type="NCBI Taxonomy" id="9913"/>
    <lineage>
        <taxon>Eukaryota</taxon>
        <taxon>Metazoa</taxon>
        <taxon>Chordata</taxon>
        <taxon>Craniata</taxon>
        <taxon>Vertebrata</taxon>
        <taxon>Euteleostomi</taxon>
        <taxon>Mammalia</taxon>
        <taxon>Eutheria</taxon>
        <taxon>Laurasiatheria</taxon>
        <taxon>Artiodactyla</taxon>
        <taxon>Ruminantia</taxon>
        <taxon>Pecora</taxon>
        <taxon>Bovidae</taxon>
        <taxon>Bovinae</taxon>
        <taxon>Bos</taxon>
    </lineage>
</organism>
<comment type="function">
    <text>May be involved in transcriptional regulation.</text>
</comment>
<comment type="subcellular location">
    <subcellularLocation>
        <location evidence="4">Nucleus</location>
    </subcellularLocation>
</comment>
<comment type="similarity">
    <text evidence="4">Belongs to the krueppel C2H2-type zinc-finger protein family.</text>
</comment>
<protein>
    <recommendedName>
        <fullName>Zinc finger protein 574</fullName>
    </recommendedName>
</protein>
<sequence>MTEESEETVLYIEHRYVCSECNQLYGSLEEVLMHQNSHVPQQHFELVGVADPGVTVAAEAASGTGLYQTLVQESQYQCLECGQLLMSPSQLLEHQELHLKMMAPQEAVPAEPPPKAPALSSSTIHYECVDCKALFASQELWLNHRQTHLRATPTKPPTPVVLGSPVVVGSPVGQTRVAVEHSYRKAEEGGEGAAVPSAAATTTEVVTEVELLLYKCSECSQLFQLPADFLEHQATHFPAPAPESEEPVLQQETLTPAPVEVPVSQPEPVPSSDHSYELRNGEALGRDRRGRRARRNNSGEPGGAATQELFCSACDQLFLSPHQLQQHLRSHREGVFKCPLCSRVFPSPSSLDQHLGDHSSESHFLCVDCGLAFGTEALLLAHRRAHTPNPLHSCPCGKTFVNLTKFLYHRRTHGVGGVPLPTTPVPPEEPVLGFPEPAPAETGEPEAPEPPVAEESSAEPAAPGTYRCLLCSREFGKALQLTRHQRFVHRLERRHKCSICGKMFKKKSHVRNHLRTHTGERPFPCPDCSKPFNSPANLARHRLTHTGERPYRCGDCGKAFTQSSTLRQHRLVHAQHFPYRCQECGVRFHRPYRLLMHRYHHTGEYPYKCRECPRSFLLRRLLEVHQLVAHAGRQPHRCSSCGAAFPSSLRLREHRCAAAAAQAPRRFECGTCGKKVGSAARLQAHEAAHAAAGPGEVLAKEPPAPRAPRAARTPITSPTTLGSAAPAAPAAPARRRGLECSECKKLFSTETSLQVHRRIHTGERPYPCPDCGKAFRQSTHLKDHRRLHTGERPFACEVCGKAFAISMRLAEHRRIHTGERPYSCPDCGKSYRSFSNLWKHRKTHQQQHQAAVRQQLAEAEAAVGLAVMETAVEALPLVEAIEIYPLAEAEGVQISG</sequence>